<evidence type="ECO:0000250" key="1">
    <source>
        <dbReference type="UniProtKB" id="P04183"/>
    </source>
</evidence>
<evidence type="ECO:0000255" key="2"/>
<evidence type="ECO:0000305" key="3"/>
<protein>
    <recommendedName>
        <fullName>Thymidine kinase, cytosolic</fullName>
        <ecNumber evidence="1">2.7.1.21</ecNumber>
    </recommendedName>
</protein>
<comment type="function">
    <text evidence="1">Cell-cycle-regulated enzyme of importance in nucleotide metabolism. Catalyzes the first enzymatic step in the salvage pathway converting thymidine into thymidine monophosphate. Transcriptional regulation limits expression to the S phase of the cell cycle and transient expression coincides with the oscillation in the intracellular dTTP concentration.</text>
</comment>
<comment type="catalytic activity">
    <reaction evidence="1">
        <text>thymidine + ATP = dTMP + ADP + H(+)</text>
        <dbReference type="Rhea" id="RHEA:19129"/>
        <dbReference type="ChEBI" id="CHEBI:15378"/>
        <dbReference type="ChEBI" id="CHEBI:17748"/>
        <dbReference type="ChEBI" id="CHEBI:30616"/>
        <dbReference type="ChEBI" id="CHEBI:63528"/>
        <dbReference type="ChEBI" id="CHEBI:456216"/>
        <dbReference type="EC" id="2.7.1.21"/>
    </reaction>
    <physiologicalReaction direction="left-to-right" evidence="1">
        <dbReference type="Rhea" id="RHEA:19130"/>
    </physiologicalReaction>
</comment>
<comment type="subunit">
    <text evidence="1">Homotetramer. Tetramerization from dimerization is induced by ATP and increases catalytic efficiency due to a high affinity for thymidine. Tetramerization is inhibited by phosphorylation at Ser-13. Interacts (via the KEN box) with FZR1.</text>
</comment>
<comment type="interaction">
    <interactant intactId="EBI-8306403">
        <id>P04047</id>
    </interactant>
    <interactant intactId="EBI-8306403">
        <id>P04047</id>
        <label>TK1</label>
    </interactant>
    <organismsDiffer>false</organismsDiffer>
    <experiments>2</experiments>
</comment>
<comment type="subcellular location">
    <subcellularLocation>
        <location>Cytoplasm</location>
    </subcellularLocation>
</comment>
<comment type="domain">
    <text evidence="1">KEN box sequence located in the C-terminal region is required for its mitotic degradation by the APC/C-FZR1 ubiquitin ligase and interaction capability with FZR1.</text>
</comment>
<comment type="PTM">
    <text evidence="1">Phosphorylated on Ser-13 in mitosis. Phosphorylation of Ser-13 by CDK1 during mitosis reduces homotetramerization and catalytic efficiency when DNA replication is complete and intracellular TK1 is still present at a high level.</text>
</comment>
<comment type="PTM">
    <text evidence="1">Polyubiquitinated. Postmitosis, ubiquitination leads to proteasomal degradation. The KEN box sequence located at the C-terminal region targets for degradation by the anaphase promoting complex (APC/C) activated and rate-limited by FZR1.</text>
</comment>
<comment type="miscellaneous">
    <text>Two forms have been identified in animal cells, one in cytosol and one in mitochondria. Activity of the cytosolic enzyme is high in proliferating cells and peaks during the S-phase of the cell cycle; it is very low in resting cells.</text>
</comment>
<comment type="similarity">
    <text evidence="3">Belongs to the thymidine kinase family.</text>
</comment>
<feature type="chain" id="PRO_0000174946" description="Thymidine kinase, cytosolic">
    <location>
        <begin position="1"/>
        <end position="224"/>
    </location>
</feature>
<feature type="short sequence motif" description="KEN box" evidence="1">
    <location>
        <begin position="203"/>
        <end position="205"/>
    </location>
</feature>
<feature type="active site" description="Proton acceptor" evidence="2">
    <location>
        <position position="99"/>
    </location>
</feature>
<feature type="binding site" evidence="3">
    <location>
        <begin position="26"/>
        <end position="33"/>
    </location>
    <ligand>
        <name>ATP</name>
        <dbReference type="ChEBI" id="CHEBI:30616"/>
    </ligand>
</feature>
<feature type="binding site" evidence="1">
    <location>
        <begin position="58"/>
        <end position="60"/>
    </location>
    <ligand>
        <name>ATP</name>
        <dbReference type="ChEBI" id="CHEBI:30616"/>
    </ligand>
</feature>
<feature type="binding site" evidence="1">
    <location>
        <begin position="98"/>
        <end position="101"/>
    </location>
    <ligand>
        <name>ATP</name>
        <dbReference type="ChEBI" id="CHEBI:30616"/>
    </ligand>
</feature>
<feature type="binding site" evidence="1">
    <location>
        <position position="129"/>
    </location>
    <ligand>
        <name>substrate</name>
    </ligand>
</feature>
<feature type="binding site" evidence="1">
    <location>
        <position position="154"/>
    </location>
    <ligand>
        <name>Zn(2+)</name>
        <dbReference type="ChEBI" id="CHEBI:29105"/>
    </ligand>
</feature>
<feature type="binding site" evidence="1">
    <location>
        <position position="157"/>
    </location>
    <ligand>
        <name>Zn(2+)</name>
        <dbReference type="ChEBI" id="CHEBI:29105"/>
    </ligand>
</feature>
<feature type="binding site" evidence="1">
    <location>
        <begin position="173"/>
        <end position="177"/>
    </location>
    <ligand>
        <name>substrate</name>
    </ligand>
</feature>
<feature type="binding site" evidence="1">
    <location>
        <position position="182"/>
    </location>
    <ligand>
        <name>substrate</name>
    </ligand>
</feature>
<feature type="binding site" evidence="1">
    <location>
        <position position="186"/>
    </location>
    <ligand>
        <name>Zn(2+)</name>
        <dbReference type="ChEBI" id="CHEBI:29105"/>
    </ligand>
</feature>
<feature type="binding site" evidence="1">
    <location>
        <position position="189"/>
    </location>
    <ligand>
        <name>Zn(2+)</name>
        <dbReference type="ChEBI" id="CHEBI:29105"/>
    </ligand>
</feature>
<feature type="modified residue" description="Phosphoserine" evidence="1">
    <location>
        <position position="13"/>
    </location>
</feature>
<proteinExistence type="evidence at protein level"/>
<dbReference type="EC" id="2.7.1.21" evidence="1"/>
<dbReference type="EMBL" id="K02611">
    <property type="protein sequence ID" value="AAA49096.1"/>
    <property type="molecule type" value="Genomic_DNA"/>
</dbReference>
<dbReference type="PIR" id="A00608">
    <property type="entry name" value="KICHT"/>
</dbReference>
<dbReference type="RefSeq" id="NP_990229.1">
    <property type="nucleotide sequence ID" value="NM_204898.2"/>
</dbReference>
<dbReference type="SMR" id="P04047"/>
<dbReference type="FunCoup" id="P04047">
    <property type="interactions" value="183"/>
</dbReference>
<dbReference type="MINT" id="P04047"/>
<dbReference type="STRING" id="9031.ENSGALP00000053115"/>
<dbReference type="PaxDb" id="9031-ENSGALP00000011630"/>
<dbReference type="GeneID" id="395719"/>
<dbReference type="KEGG" id="gga:395719"/>
<dbReference type="CTD" id="7083"/>
<dbReference type="VEuPathDB" id="HostDB:geneid_395719"/>
<dbReference type="eggNOG" id="KOG3125">
    <property type="taxonomic scope" value="Eukaryota"/>
</dbReference>
<dbReference type="HOGENOM" id="CLU_064400_3_1_1"/>
<dbReference type="InParanoid" id="P04047"/>
<dbReference type="OMA" id="EAYEPRC"/>
<dbReference type="OrthoDB" id="439028at2759"/>
<dbReference type="PhylomeDB" id="P04047"/>
<dbReference type="TreeFam" id="TF314839"/>
<dbReference type="BRENDA" id="2.7.1.21">
    <property type="organism ID" value="1306"/>
</dbReference>
<dbReference type="Reactome" id="R-GGA-73614">
    <property type="pathway name" value="Pyrimidine salvage"/>
</dbReference>
<dbReference type="PRO" id="PR:P04047"/>
<dbReference type="Proteomes" id="UP000000539">
    <property type="component" value="Chromosome 18"/>
</dbReference>
<dbReference type="Bgee" id="ENSGALG00000007191">
    <property type="expression patterns" value="Expressed in colon and 12 other cell types or tissues"/>
</dbReference>
<dbReference type="GO" id="GO:0005737">
    <property type="term" value="C:cytoplasm"/>
    <property type="evidence" value="ECO:0007669"/>
    <property type="project" value="UniProtKB-SubCell"/>
</dbReference>
<dbReference type="GO" id="GO:0005524">
    <property type="term" value="F:ATP binding"/>
    <property type="evidence" value="ECO:0007669"/>
    <property type="project" value="UniProtKB-KW"/>
</dbReference>
<dbReference type="GO" id="GO:0042802">
    <property type="term" value="F:identical protein binding"/>
    <property type="evidence" value="ECO:0000353"/>
    <property type="project" value="IntAct"/>
</dbReference>
<dbReference type="GO" id="GO:0004797">
    <property type="term" value="F:thymidine kinase activity"/>
    <property type="evidence" value="ECO:0000250"/>
    <property type="project" value="UniProtKB"/>
</dbReference>
<dbReference type="GO" id="GO:0008270">
    <property type="term" value="F:zinc ion binding"/>
    <property type="evidence" value="ECO:0000250"/>
    <property type="project" value="UniProtKB"/>
</dbReference>
<dbReference type="GO" id="GO:0071897">
    <property type="term" value="P:DNA biosynthetic process"/>
    <property type="evidence" value="ECO:0007669"/>
    <property type="project" value="UniProtKB-KW"/>
</dbReference>
<dbReference type="GO" id="GO:0051289">
    <property type="term" value="P:protein homotetramerization"/>
    <property type="evidence" value="ECO:0000250"/>
    <property type="project" value="UniProtKB"/>
</dbReference>
<dbReference type="GO" id="GO:0046104">
    <property type="term" value="P:thymidine metabolic process"/>
    <property type="evidence" value="ECO:0000250"/>
    <property type="project" value="UniProtKB"/>
</dbReference>
<dbReference type="FunFam" id="3.30.60.20:FF:000028">
    <property type="entry name" value="Thymidine kinase"/>
    <property type="match status" value="1"/>
</dbReference>
<dbReference type="FunFam" id="3.40.50.300:FF:000761">
    <property type="entry name" value="Thymidine kinase"/>
    <property type="match status" value="1"/>
</dbReference>
<dbReference type="Gene3D" id="3.30.60.20">
    <property type="match status" value="1"/>
</dbReference>
<dbReference type="Gene3D" id="3.40.50.300">
    <property type="entry name" value="P-loop containing nucleotide triphosphate hydrolases"/>
    <property type="match status" value="1"/>
</dbReference>
<dbReference type="InterPro" id="IPR027417">
    <property type="entry name" value="P-loop_NTPase"/>
</dbReference>
<dbReference type="InterPro" id="IPR001267">
    <property type="entry name" value="Thymidine_kinase"/>
</dbReference>
<dbReference type="InterPro" id="IPR020633">
    <property type="entry name" value="Thymidine_kinase_CS"/>
</dbReference>
<dbReference type="PANTHER" id="PTHR11441">
    <property type="entry name" value="THYMIDINE KINASE"/>
    <property type="match status" value="1"/>
</dbReference>
<dbReference type="PANTHER" id="PTHR11441:SF0">
    <property type="entry name" value="THYMIDINE KINASE, CYTOSOLIC"/>
    <property type="match status" value="1"/>
</dbReference>
<dbReference type="Pfam" id="PF00265">
    <property type="entry name" value="TK"/>
    <property type="match status" value="1"/>
</dbReference>
<dbReference type="PIRSF" id="PIRSF035805">
    <property type="entry name" value="TK_cell"/>
    <property type="match status" value="1"/>
</dbReference>
<dbReference type="SUPFAM" id="SSF57716">
    <property type="entry name" value="Glucocorticoid receptor-like (DNA-binding domain)"/>
    <property type="match status" value="1"/>
</dbReference>
<dbReference type="SUPFAM" id="SSF52540">
    <property type="entry name" value="P-loop containing nucleoside triphosphate hydrolases"/>
    <property type="match status" value="1"/>
</dbReference>
<dbReference type="PROSITE" id="PS00603">
    <property type="entry name" value="TK_CELLULAR_TYPE"/>
    <property type="match status" value="1"/>
</dbReference>
<name>KITH_CHICK</name>
<reference key="1">
    <citation type="journal article" date="1984" name="Nucleic Acids Res.">
        <title>The nucleotide sequence of the chicken thymidine kinase gene and the relationship of its predicted polypeptide to that of the vaccinia virus thymidine kinase.</title>
        <authorList>
            <person name="Kwoh T.J."/>
            <person name="Engler J.A."/>
        </authorList>
    </citation>
    <scope>NUCLEOTIDE SEQUENCE [GENOMIC DNA]</scope>
</reference>
<reference key="2">
    <citation type="journal article" date="1984" name="Mol. Cell. Biol.">
        <title>Genetic and physical analysis of the chicken tk gene.</title>
        <authorList>
            <person name="Merrill G.F."/>
            <person name="Harland R.M."/>
            <person name="Groudine M."/>
            <person name="McKnight S.L."/>
        </authorList>
    </citation>
    <scope>NUCLEOTIDE SEQUENCE [GENOMIC DNA]</scope>
</reference>
<keyword id="KW-0067">ATP-binding</keyword>
<keyword id="KW-0963">Cytoplasm</keyword>
<keyword id="KW-0237">DNA synthesis</keyword>
<keyword id="KW-0418">Kinase</keyword>
<keyword id="KW-0479">Metal-binding</keyword>
<keyword id="KW-0547">Nucleotide-binding</keyword>
<keyword id="KW-0597">Phosphoprotein</keyword>
<keyword id="KW-1185">Reference proteome</keyword>
<keyword id="KW-0808">Transferase</keyword>
<keyword id="KW-0832">Ubl conjugation</keyword>
<keyword id="KW-0862">Zinc</keyword>
<organism>
    <name type="scientific">Gallus gallus</name>
    <name type="common">Chicken</name>
    <dbReference type="NCBI Taxonomy" id="9031"/>
    <lineage>
        <taxon>Eukaryota</taxon>
        <taxon>Metazoa</taxon>
        <taxon>Chordata</taxon>
        <taxon>Craniata</taxon>
        <taxon>Vertebrata</taxon>
        <taxon>Euteleostomi</taxon>
        <taxon>Archelosauria</taxon>
        <taxon>Archosauria</taxon>
        <taxon>Dinosauria</taxon>
        <taxon>Saurischia</taxon>
        <taxon>Theropoda</taxon>
        <taxon>Coelurosauria</taxon>
        <taxon>Aves</taxon>
        <taxon>Neognathae</taxon>
        <taxon>Galloanserae</taxon>
        <taxon>Galliformes</taxon>
        <taxon>Phasianidae</taxon>
        <taxon>Phasianinae</taxon>
        <taxon>Gallus</taxon>
    </lineage>
</organism>
<sequence>MNCLTVPGVHPGSPGRPRGQIQVIFGPMFSGKSTELMRRVRRFQLAQYRCLLVKYAKDTRYCTTGVSTHDRNTMEARPACALQDVYQEALGSAVIGIDEGQFFPDIVEFCEKMANTGKTVIVAALDGTFQRKAFGSILNLVPLAESVVKLNAVCMECYREASYTKRLGAEREVEVIGGADKYHSVCRACYFQKRPQQLGSENKENVPMGVKQLDMPASRKIFAS</sequence>
<accession>P04047</accession>
<gene>
    <name type="primary">TK1</name>
</gene>